<reference key="1">
    <citation type="submission" date="2008-02" db="EMBL/GenBank/DDBJ databases">
        <title>Complete sequence of Pseudomonas putida W619.</title>
        <authorList>
            <person name="Copeland A."/>
            <person name="Lucas S."/>
            <person name="Lapidus A."/>
            <person name="Barry K."/>
            <person name="Detter J.C."/>
            <person name="Glavina del Rio T."/>
            <person name="Dalin E."/>
            <person name="Tice H."/>
            <person name="Pitluck S."/>
            <person name="Chain P."/>
            <person name="Malfatti S."/>
            <person name="Shin M."/>
            <person name="Vergez L."/>
            <person name="Schmutz J."/>
            <person name="Larimer F."/>
            <person name="Land M."/>
            <person name="Hauser L."/>
            <person name="Kyrpides N."/>
            <person name="Kim E."/>
            <person name="Taghavi S."/>
            <person name="Vangronsveld D."/>
            <person name="van der Lelie D."/>
            <person name="Richardson P."/>
        </authorList>
    </citation>
    <scope>NUCLEOTIDE SEQUENCE [LARGE SCALE GENOMIC DNA]</scope>
    <source>
        <strain>W619</strain>
    </source>
</reference>
<name>QUEF_PSEPW</name>
<sequence length="276" mass="30716">MHPAAEHSPLGKSSEYIATYMPSLLFPIPRTAKWAELGVTAQTLPWHGVDYWNCFELSWLLPSGKPVVAIGEFAIPADSPNIIESKSFKLYLNSLNQTVFATIGELQACLEKDLSAAAGKPVSVQVRTLAEVEAQGVVALPGQCIDALDVTISNYEQPQPELLRCNPERVVEETLHSHLLKSNCPVTGQPDWGSVVVEYKGRALDHASLLTYLISFRQHADFHEQCVERIYLDLKNLLQPEHLTVYARYVRRGGLDINPYRSTGAISPENVRLVRQ</sequence>
<organism>
    <name type="scientific">Pseudomonas putida (strain W619)</name>
    <dbReference type="NCBI Taxonomy" id="390235"/>
    <lineage>
        <taxon>Bacteria</taxon>
        <taxon>Pseudomonadati</taxon>
        <taxon>Pseudomonadota</taxon>
        <taxon>Gammaproteobacteria</taxon>
        <taxon>Pseudomonadales</taxon>
        <taxon>Pseudomonadaceae</taxon>
        <taxon>Pseudomonas</taxon>
    </lineage>
</organism>
<protein>
    <recommendedName>
        <fullName evidence="1">NADPH-dependent 7-cyano-7-deazaguanine reductase</fullName>
        <ecNumber evidence="1">1.7.1.13</ecNumber>
    </recommendedName>
    <alternativeName>
        <fullName evidence="1">7-cyano-7-carbaguanine reductase</fullName>
    </alternativeName>
    <alternativeName>
        <fullName evidence="1">NADPH-dependent nitrile oxidoreductase</fullName>
    </alternativeName>
    <alternativeName>
        <fullName evidence="1">PreQ(0) reductase</fullName>
    </alternativeName>
</protein>
<dbReference type="EC" id="1.7.1.13" evidence="1"/>
<dbReference type="EMBL" id="CP000949">
    <property type="protein sequence ID" value="ACA72182.1"/>
    <property type="molecule type" value="Genomic_DNA"/>
</dbReference>
<dbReference type="SMR" id="B1J615"/>
<dbReference type="STRING" id="390235.PputW619_1677"/>
<dbReference type="KEGG" id="ppw:PputW619_1677"/>
<dbReference type="eggNOG" id="COG0780">
    <property type="taxonomic scope" value="Bacteria"/>
</dbReference>
<dbReference type="eggNOG" id="COG2904">
    <property type="taxonomic scope" value="Bacteria"/>
</dbReference>
<dbReference type="HOGENOM" id="CLU_054738_0_0_6"/>
<dbReference type="OrthoDB" id="9789995at2"/>
<dbReference type="UniPathway" id="UPA00392"/>
<dbReference type="GO" id="GO:0005737">
    <property type="term" value="C:cytoplasm"/>
    <property type="evidence" value="ECO:0007669"/>
    <property type="project" value="UniProtKB-SubCell"/>
</dbReference>
<dbReference type="GO" id="GO:0033739">
    <property type="term" value="F:preQ1 synthase activity"/>
    <property type="evidence" value="ECO:0007669"/>
    <property type="project" value="UniProtKB-UniRule"/>
</dbReference>
<dbReference type="GO" id="GO:0008616">
    <property type="term" value="P:queuosine biosynthetic process"/>
    <property type="evidence" value="ECO:0007669"/>
    <property type="project" value="UniProtKB-UniRule"/>
</dbReference>
<dbReference type="GO" id="GO:0006400">
    <property type="term" value="P:tRNA modification"/>
    <property type="evidence" value="ECO:0007669"/>
    <property type="project" value="UniProtKB-UniRule"/>
</dbReference>
<dbReference type="Gene3D" id="3.30.1130.10">
    <property type="match status" value="2"/>
</dbReference>
<dbReference type="HAMAP" id="MF_00817">
    <property type="entry name" value="QueF_type2"/>
    <property type="match status" value="1"/>
</dbReference>
<dbReference type="InterPro" id="IPR043133">
    <property type="entry name" value="GTP-CH-I_C/QueF"/>
</dbReference>
<dbReference type="InterPro" id="IPR050084">
    <property type="entry name" value="NADPH_dep_7-cyano-7-deazaG_red"/>
</dbReference>
<dbReference type="InterPro" id="IPR029500">
    <property type="entry name" value="QueF"/>
</dbReference>
<dbReference type="InterPro" id="IPR029139">
    <property type="entry name" value="QueF_N"/>
</dbReference>
<dbReference type="InterPro" id="IPR016428">
    <property type="entry name" value="QueF_type2"/>
</dbReference>
<dbReference type="NCBIfam" id="TIGR03138">
    <property type="entry name" value="QueF"/>
    <property type="match status" value="1"/>
</dbReference>
<dbReference type="PANTHER" id="PTHR34354">
    <property type="entry name" value="NADPH-DEPENDENT 7-CYANO-7-DEAZAGUANINE REDUCTASE"/>
    <property type="match status" value="1"/>
</dbReference>
<dbReference type="PANTHER" id="PTHR34354:SF1">
    <property type="entry name" value="NADPH-DEPENDENT 7-CYANO-7-DEAZAGUANINE REDUCTASE"/>
    <property type="match status" value="1"/>
</dbReference>
<dbReference type="Pfam" id="PF14489">
    <property type="entry name" value="QueF"/>
    <property type="match status" value="1"/>
</dbReference>
<dbReference type="Pfam" id="PF14819">
    <property type="entry name" value="QueF_N"/>
    <property type="match status" value="1"/>
</dbReference>
<dbReference type="PIRSF" id="PIRSF004750">
    <property type="entry name" value="Nitrile_oxidored_YqcD_prd"/>
    <property type="match status" value="1"/>
</dbReference>
<dbReference type="SUPFAM" id="SSF55620">
    <property type="entry name" value="Tetrahydrobiopterin biosynthesis enzymes-like"/>
    <property type="match status" value="1"/>
</dbReference>
<gene>
    <name evidence="1" type="primary">queF</name>
    <name type="ordered locus">PputW619_1677</name>
</gene>
<proteinExistence type="inferred from homology"/>
<comment type="function">
    <text evidence="1">Catalyzes the NADPH-dependent reduction of 7-cyano-7-deazaguanine (preQ0) to 7-aminomethyl-7-deazaguanine (preQ1).</text>
</comment>
<comment type="catalytic activity">
    <reaction evidence="1">
        <text>7-aminomethyl-7-carbaguanine + 2 NADP(+) = 7-cyano-7-deazaguanine + 2 NADPH + 3 H(+)</text>
        <dbReference type="Rhea" id="RHEA:13409"/>
        <dbReference type="ChEBI" id="CHEBI:15378"/>
        <dbReference type="ChEBI" id="CHEBI:45075"/>
        <dbReference type="ChEBI" id="CHEBI:57783"/>
        <dbReference type="ChEBI" id="CHEBI:58349"/>
        <dbReference type="ChEBI" id="CHEBI:58703"/>
        <dbReference type="EC" id="1.7.1.13"/>
    </reaction>
</comment>
<comment type="pathway">
    <text evidence="1">tRNA modification; tRNA-queuosine biosynthesis.</text>
</comment>
<comment type="subunit">
    <text evidence="1">Homodimer.</text>
</comment>
<comment type="subcellular location">
    <subcellularLocation>
        <location evidence="1">Cytoplasm</location>
    </subcellularLocation>
</comment>
<comment type="similarity">
    <text evidence="1">Belongs to the GTP cyclohydrolase I family. QueF type 2 subfamily.</text>
</comment>
<feature type="chain" id="PRO_1000134279" description="NADPH-dependent 7-cyano-7-deazaguanine reductase">
    <location>
        <begin position="1"/>
        <end position="276"/>
    </location>
</feature>
<feature type="active site" description="Thioimide intermediate" evidence="1">
    <location>
        <position position="184"/>
    </location>
</feature>
<feature type="active site" description="Proton donor" evidence="1">
    <location>
        <position position="191"/>
    </location>
</feature>
<feature type="binding site" evidence="1">
    <location>
        <begin position="83"/>
        <end position="85"/>
    </location>
    <ligand>
        <name>substrate</name>
    </ligand>
</feature>
<feature type="binding site" evidence="1">
    <location>
        <begin position="85"/>
        <end position="86"/>
    </location>
    <ligand>
        <name>NADPH</name>
        <dbReference type="ChEBI" id="CHEBI:57783"/>
    </ligand>
</feature>
<feature type="binding site" evidence="1">
    <location>
        <begin position="223"/>
        <end position="224"/>
    </location>
    <ligand>
        <name>substrate</name>
    </ligand>
</feature>
<feature type="binding site" evidence="1">
    <location>
        <begin position="252"/>
        <end position="253"/>
    </location>
    <ligand>
        <name>NADPH</name>
        <dbReference type="ChEBI" id="CHEBI:57783"/>
    </ligand>
</feature>
<accession>B1J615</accession>
<evidence type="ECO:0000255" key="1">
    <source>
        <dbReference type="HAMAP-Rule" id="MF_00817"/>
    </source>
</evidence>
<keyword id="KW-0963">Cytoplasm</keyword>
<keyword id="KW-0521">NADP</keyword>
<keyword id="KW-0560">Oxidoreductase</keyword>
<keyword id="KW-0671">Queuosine biosynthesis</keyword>